<protein>
    <recommendedName>
        <fullName evidence="1">Inner membrane-spanning protein YciB</fullName>
    </recommendedName>
</protein>
<comment type="function">
    <text evidence="1">Plays a role in cell envelope biogenesis, maintenance of cell envelope integrity and membrane homeostasis.</text>
</comment>
<comment type="subcellular location">
    <subcellularLocation>
        <location evidence="1">Cell inner membrane</location>
        <topology evidence="1">Multi-pass membrane protein</topology>
    </subcellularLocation>
</comment>
<comment type="similarity">
    <text evidence="1">Belongs to the YciB family.</text>
</comment>
<name>YCIB_ECOSE</name>
<dbReference type="EMBL" id="AP009240">
    <property type="protein sequence ID" value="BAG76827.1"/>
    <property type="molecule type" value="Genomic_DNA"/>
</dbReference>
<dbReference type="RefSeq" id="WP_000808667.1">
    <property type="nucleotide sequence ID" value="NC_011415.1"/>
</dbReference>
<dbReference type="KEGG" id="ecy:ECSE_1303"/>
<dbReference type="HOGENOM" id="CLU_089554_2_0_6"/>
<dbReference type="Proteomes" id="UP000008199">
    <property type="component" value="Chromosome"/>
</dbReference>
<dbReference type="GO" id="GO:0005886">
    <property type="term" value="C:plasma membrane"/>
    <property type="evidence" value="ECO:0007669"/>
    <property type="project" value="UniProtKB-SubCell"/>
</dbReference>
<dbReference type="HAMAP" id="MF_00189">
    <property type="entry name" value="YciB"/>
    <property type="match status" value="1"/>
</dbReference>
<dbReference type="InterPro" id="IPR006008">
    <property type="entry name" value="YciB"/>
</dbReference>
<dbReference type="NCBIfam" id="TIGR00997">
    <property type="entry name" value="ispZ"/>
    <property type="match status" value="1"/>
</dbReference>
<dbReference type="NCBIfam" id="NF001324">
    <property type="entry name" value="PRK00259.1-2"/>
    <property type="match status" value="1"/>
</dbReference>
<dbReference type="NCBIfam" id="NF001325">
    <property type="entry name" value="PRK00259.1-3"/>
    <property type="match status" value="1"/>
</dbReference>
<dbReference type="NCBIfam" id="NF001326">
    <property type="entry name" value="PRK00259.1-4"/>
    <property type="match status" value="1"/>
</dbReference>
<dbReference type="PANTHER" id="PTHR36917:SF1">
    <property type="entry name" value="INNER MEMBRANE-SPANNING PROTEIN YCIB"/>
    <property type="match status" value="1"/>
</dbReference>
<dbReference type="PANTHER" id="PTHR36917">
    <property type="entry name" value="INTRACELLULAR SEPTATION PROTEIN A-RELATED"/>
    <property type="match status" value="1"/>
</dbReference>
<dbReference type="Pfam" id="PF04279">
    <property type="entry name" value="IspA"/>
    <property type="match status" value="1"/>
</dbReference>
<gene>
    <name evidence="1" type="primary">yciB</name>
    <name type="ordered locus">ECSE_1303</name>
</gene>
<evidence type="ECO:0000255" key="1">
    <source>
        <dbReference type="HAMAP-Rule" id="MF_00189"/>
    </source>
</evidence>
<feature type="chain" id="PRO_1000098882" description="Inner membrane-spanning protein YciB">
    <location>
        <begin position="1"/>
        <end position="179"/>
    </location>
</feature>
<feature type="transmembrane region" description="Helical" evidence="1">
    <location>
        <begin position="22"/>
        <end position="42"/>
    </location>
</feature>
<feature type="transmembrane region" description="Helical" evidence="1">
    <location>
        <begin position="50"/>
        <end position="70"/>
    </location>
</feature>
<feature type="transmembrane region" description="Helical" evidence="1">
    <location>
        <begin position="76"/>
        <end position="96"/>
    </location>
</feature>
<feature type="transmembrane region" description="Helical" evidence="1">
    <location>
        <begin position="121"/>
        <end position="141"/>
    </location>
</feature>
<feature type="transmembrane region" description="Helical" evidence="1">
    <location>
        <begin position="149"/>
        <end position="169"/>
    </location>
</feature>
<organism>
    <name type="scientific">Escherichia coli (strain SE11)</name>
    <dbReference type="NCBI Taxonomy" id="409438"/>
    <lineage>
        <taxon>Bacteria</taxon>
        <taxon>Pseudomonadati</taxon>
        <taxon>Pseudomonadota</taxon>
        <taxon>Gammaproteobacteria</taxon>
        <taxon>Enterobacterales</taxon>
        <taxon>Enterobacteriaceae</taxon>
        <taxon>Escherichia</taxon>
    </lineage>
</organism>
<proteinExistence type="inferred from homology"/>
<keyword id="KW-0997">Cell inner membrane</keyword>
<keyword id="KW-1003">Cell membrane</keyword>
<keyword id="KW-0472">Membrane</keyword>
<keyword id="KW-0812">Transmembrane</keyword>
<keyword id="KW-1133">Transmembrane helix</keyword>
<sequence length="179" mass="20790">MKQFLDFLPLVVFFAFYKIYDIYAATAALIVATAIVLIYSWVRFRKVEKMALITFVLVVVFGGLTLFFHNDEFIKWKVTVIYALFAGALLVSQWVMKKPLIQRMLGKELTLPQPVWSKLNLAWAVFFILCGLANIYIAFWLPQNIWVNFKVFGLTALTLIFTLLSGIYIYRHMPQEDKS</sequence>
<accession>B6I9W8</accession>
<reference key="1">
    <citation type="journal article" date="2008" name="DNA Res.">
        <title>Complete genome sequence and comparative analysis of the wild-type commensal Escherichia coli strain SE11 isolated from a healthy adult.</title>
        <authorList>
            <person name="Oshima K."/>
            <person name="Toh H."/>
            <person name="Ogura Y."/>
            <person name="Sasamoto H."/>
            <person name="Morita H."/>
            <person name="Park S.-H."/>
            <person name="Ooka T."/>
            <person name="Iyoda S."/>
            <person name="Taylor T.D."/>
            <person name="Hayashi T."/>
            <person name="Itoh K."/>
            <person name="Hattori M."/>
        </authorList>
    </citation>
    <scope>NUCLEOTIDE SEQUENCE [LARGE SCALE GENOMIC DNA]</scope>
    <source>
        <strain>SE11</strain>
    </source>
</reference>